<gene>
    <name evidence="1" type="primary">pyrD</name>
    <name type="ordered locus">Adeh_1294</name>
</gene>
<name>PYRD_ANADE</name>
<reference key="1">
    <citation type="submission" date="2006-01" db="EMBL/GenBank/DDBJ databases">
        <title>Complete sequence of Anaeromyxobacter dehalogenans 2CP-C.</title>
        <authorList>
            <person name="Copeland A."/>
            <person name="Lucas S."/>
            <person name="Lapidus A."/>
            <person name="Barry K."/>
            <person name="Detter J.C."/>
            <person name="Glavina T."/>
            <person name="Hammon N."/>
            <person name="Israni S."/>
            <person name="Pitluck S."/>
            <person name="Brettin T."/>
            <person name="Bruce D."/>
            <person name="Han C."/>
            <person name="Tapia R."/>
            <person name="Gilna P."/>
            <person name="Kiss H."/>
            <person name="Schmutz J."/>
            <person name="Larimer F."/>
            <person name="Land M."/>
            <person name="Kyrpides N."/>
            <person name="Anderson I."/>
            <person name="Sanford R.A."/>
            <person name="Ritalahti K.M."/>
            <person name="Thomas H.S."/>
            <person name="Kirby J.R."/>
            <person name="Zhulin I.B."/>
            <person name="Loeffler F.E."/>
            <person name="Richardson P."/>
        </authorList>
    </citation>
    <scope>NUCLEOTIDE SEQUENCE [LARGE SCALE GENOMIC DNA]</scope>
    <source>
        <strain>2CP-C</strain>
    </source>
</reference>
<organism>
    <name type="scientific">Anaeromyxobacter dehalogenans (strain 2CP-C)</name>
    <dbReference type="NCBI Taxonomy" id="290397"/>
    <lineage>
        <taxon>Bacteria</taxon>
        <taxon>Pseudomonadati</taxon>
        <taxon>Myxococcota</taxon>
        <taxon>Myxococcia</taxon>
        <taxon>Myxococcales</taxon>
        <taxon>Cystobacterineae</taxon>
        <taxon>Anaeromyxobacteraceae</taxon>
        <taxon>Anaeromyxobacter</taxon>
    </lineage>
</organism>
<accession>Q2IQI6</accession>
<comment type="function">
    <text evidence="1">Catalyzes the conversion of dihydroorotate to orotate with quinone as electron acceptor.</text>
</comment>
<comment type="catalytic activity">
    <reaction evidence="1">
        <text>(S)-dihydroorotate + a quinone = orotate + a quinol</text>
        <dbReference type="Rhea" id="RHEA:30187"/>
        <dbReference type="ChEBI" id="CHEBI:24646"/>
        <dbReference type="ChEBI" id="CHEBI:30839"/>
        <dbReference type="ChEBI" id="CHEBI:30864"/>
        <dbReference type="ChEBI" id="CHEBI:132124"/>
        <dbReference type="EC" id="1.3.5.2"/>
    </reaction>
</comment>
<comment type="cofactor">
    <cofactor evidence="1">
        <name>FMN</name>
        <dbReference type="ChEBI" id="CHEBI:58210"/>
    </cofactor>
    <text evidence="1">Binds 1 FMN per subunit.</text>
</comment>
<comment type="pathway">
    <text evidence="1">Pyrimidine metabolism; UMP biosynthesis via de novo pathway; orotate from (S)-dihydroorotate (quinone route): step 1/1.</text>
</comment>
<comment type="subunit">
    <text evidence="1">Monomer.</text>
</comment>
<comment type="subcellular location">
    <subcellularLocation>
        <location evidence="1">Cell membrane</location>
        <topology evidence="1">Peripheral membrane protein</topology>
    </subcellularLocation>
</comment>
<comment type="similarity">
    <text evidence="1">Belongs to the dihydroorotate dehydrogenase family. Type 2 subfamily.</text>
</comment>
<evidence type="ECO:0000255" key="1">
    <source>
        <dbReference type="HAMAP-Rule" id="MF_00225"/>
    </source>
</evidence>
<protein>
    <recommendedName>
        <fullName evidence="1">Dihydroorotate dehydrogenase (quinone)</fullName>
        <ecNumber evidence="1">1.3.5.2</ecNumber>
    </recommendedName>
    <alternativeName>
        <fullName evidence="1">DHOdehase</fullName>
        <shortName evidence="1">DHOD</shortName>
        <shortName evidence="1">DHODase</shortName>
    </alternativeName>
    <alternativeName>
        <fullName evidence="1">Dihydroorotate oxidase</fullName>
    </alternativeName>
</protein>
<keyword id="KW-1003">Cell membrane</keyword>
<keyword id="KW-0285">Flavoprotein</keyword>
<keyword id="KW-0288">FMN</keyword>
<keyword id="KW-0472">Membrane</keyword>
<keyword id="KW-0560">Oxidoreductase</keyword>
<keyword id="KW-0665">Pyrimidine biosynthesis</keyword>
<keyword id="KW-1185">Reference proteome</keyword>
<feature type="chain" id="PRO_1000024149" description="Dihydroorotate dehydrogenase (quinone)">
    <location>
        <begin position="1"/>
        <end position="364"/>
    </location>
</feature>
<feature type="active site" description="Nucleophile" evidence="1">
    <location>
        <position position="178"/>
    </location>
</feature>
<feature type="binding site" evidence="1">
    <location>
        <begin position="62"/>
        <end position="66"/>
    </location>
    <ligand>
        <name>FMN</name>
        <dbReference type="ChEBI" id="CHEBI:58210"/>
    </ligand>
</feature>
<feature type="binding site" evidence="1">
    <location>
        <position position="66"/>
    </location>
    <ligand>
        <name>substrate</name>
    </ligand>
</feature>
<feature type="binding site" evidence="1">
    <location>
        <position position="86"/>
    </location>
    <ligand>
        <name>FMN</name>
        <dbReference type="ChEBI" id="CHEBI:58210"/>
    </ligand>
</feature>
<feature type="binding site" evidence="1">
    <location>
        <begin position="111"/>
        <end position="115"/>
    </location>
    <ligand>
        <name>substrate</name>
    </ligand>
</feature>
<feature type="binding site" evidence="1">
    <location>
        <position position="142"/>
    </location>
    <ligand>
        <name>FMN</name>
        <dbReference type="ChEBI" id="CHEBI:58210"/>
    </ligand>
</feature>
<feature type="binding site" evidence="1">
    <location>
        <position position="175"/>
    </location>
    <ligand>
        <name>FMN</name>
        <dbReference type="ChEBI" id="CHEBI:58210"/>
    </ligand>
</feature>
<feature type="binding site" evidence="1">
    <location>
        <position position="175"/>
    </location>
    <ligand>
        <name>substrate</name>
    </ligand>
</feature>
<feature type="binding site" evidence="1">
    <location>
        <position position="180"/>
    </location>
    <ligand>
        <name>substrate</name>
    </ligand>
</feature>
<feature type="binding site" evidence="1">
    <location>
        <position position="216"/>
    </location>
    <ligand>
        <name>FMN</name>
        <dbReference type="ChEBI" id="CHEBI:58210"/>
    </ligand>
</feature>
<feature type="binding site" evidence="1">
    <location>
        <position position="244"/>
    </location>
    <ligand>
        <name>FMN</name>
        <dbReference type="ChEBI" id="CHEBI:58210"/>
    </ligand>
</feature>
<feature type="binding site" evidence="1">
    <location>
        <begin position="245"/>
        <end position="246"/>
    </location>
    <ligand>
        <name>substrate</name>
    </ligand>
</feature>
<feature type="binding site" evidence="1">
    <location>
        <position position="267"/>
    </location>
    <ligand>
        <name>FMN</name>
        <dbReference type="ChEBI" id="CHEBI:58210"/>
    </ligand>
</feature>
<feature type="binding site" evidence="1">
    <location>
        <position position="296"/>
    </location>
    <ligand>
        <name>FMN</name>
        <dbReference type="ChEBI" id="CHEBI:58210"/>
    </ligand>
</feature>
<feature type="binding site" evidence="1">
    <location>
        <begin position="317"/>
        <end position="318"/>
    </location>
    <ligand>
        <name>FMN</name>
        <dbReference type="ChEBI" id="CHEBI:58210"/>
    </ligand>
</feature>
<dbReference type="EC" id="1.3.5.2" evidence="1"/>
<dbReference type="EMBL" id="CP000251">
    <property type="protein sequence ID" value="ABC81068.1"/>
    <property type="molecule type" value="Genomic_DNA"/>
</dbReference>
<dbReference type="RefSeq" id="WP_011420351.1">
    <property type="nucleotide sequence ID" value="NC_007760.1"/>
</dbReference>
<dbReference type="SMR" id="Q2IQI6"/>
<dbReference type="STRING" id="290397.Adeh_1294"/>
<dbReference type="KEGG" id="ade:Adeh_1294"/>
<dbReference type="eggNOG" id="COG0167">
    <property type="taxonomic scope" value="Bacteria"/>
</dbReference>
<dbReference type="HOGENOM" id="CLU_013640_0_0_7"/>
<dbReference type="OrthoDB" id="9802377at2"/>
<dbReference type="UniPathway" id="UPA00070">
    <property type="reaction ID" value="UER00946"/>
</dbReference>
<dbReference type="Proteomes" id="UP000001935">
    <property type="component" value="Chromosome"/>
</dbReference>
<dbReference type="GO" id="GO:0005737">
    <property type="term" value="C:cytoplasm"/>
    <property type="evidence" value="ECO:0007669"/>
    <property type="project" value="InterPro"/>
</dbReference>
<dbReference type="GO" id="GO:0005886">
    <property type="term" value="C:plasma membrane"/>
    <property type="evidence" value="ECO:0007669"/>
    <property type="project" value="UniProtKB-SubCell"/>
</dbReference>
<dbReference type="GO" id="GO:0106430">
    <property type="term" value="F:dihydroorotate dehydrogenase (quinone) activity"/>
    <property type="evidence" value="ECO:0007669"/>
    <property type="project" value="UniProtKB-EC"/>
</dbReference>
<dbReference type="GO" id="GO:0006207">
    <property type="term" value="P:'de novo' pyrimidine nucleobase biosynthetic process"/>
    <property type="evidence" value="ECO:0007669"/>
    <property type="project" value="InterPro"/>
</dbReference>
<dbReference type="GO" id="GO:0044205">
    <property type="term" value="P:'de novo' UMP biosynthetic process"/>
    <property type="evidence" value="ECO:0007669"/>
    <property type="project" value="UniProtKB-UniRule"/>
</dbReference>
<dbReference type="CDD" id="cd04738">
    <property type="entry name" value="DHOD_2_like"/>
    <property type="match status" value="1"/>
</dbReference>
<dbReference type="Gene3D" id="3.20.20.70">
    <property type="entry name" value="Aldolase class I"/>
    <property type="match status" value="1"/>
</dbReference>
<dbReference type="HAMAP" id="MF_00225">
    <property type="entry name" value="DHO_dh_type2"/>
    <property type="match status" value="1"/>
</dbReference>
<dbReference type="InterPro" id="IPR013785">
    <property type="entry name" value="Aldolase_TIM"/>
</dbReference>
<dbReference type="InterPro" id="IPR050074">
    <property type="entry name" value="DHO_dehydrogenase"/>
</dbReference>
<dbReference type="InterPro" id="IPR005719">
    <property type="entry name" value="Dihydroorotate_DH_2"/>
</dbReference>
<dbReference type="InterPro" id="IPR005720">
    <property type="entry name" value="Dihydroorotate_DH_cat"/>
</dbReference>
<dbReference type="InterPro" id="IPR001295">
    <property type="entry name" value="Dihydroorotate_DH_CS"/>
</dbReference>
<dbReference type="NCBIfam" id="NF003645">
    <property type="entry name" value="PRK05286.1-2"/>
    <property type="match status" value="1"/>
</dbReference>
<dbReference type="NCBIfam" id="NF003652">
    <property type="entry name" value="PRK05286.2-5"/>
    <property type="match status" value="1"/>
</dbReference>
<dbReference type="NCBIfam" id="TIGR01036">
    <property type="entry name" value="pyrD_sub2"/>
    <property type="match status" value="1"/>
</dbReference>
<dbReference type="PANTHER" id="PTHR48109:SF4">
    <property type="entry name" value="DIHYDROOROTATE DEHYDROGENASE (QUINONE), MITOCHONDRIAL"/>
    <property type="match status" value="1"/>
</dbReference>
<dbReference type="PANTHER" id="PTHR48109">
    <property type="entry name" value="DIHYDROOROTATE DEHYDROGENASE (QUINONE), MITOCHONDRIAL-RELATED"/>
    <property type="match status" value="1"/>
</dbReference>
<dbReference type="Pfam" id="PF01180">
    <property type="entry name" value="DHO_dh"/>
    <property type="match status" value="1"/>
</dbReference>
<dbReference type="SUPFAM" id="SSF51395">
    <property type="entry name" value="FMN-linked oxidoreductases"/>
    <property type="match status" value="1"/>
</dbReference>
<dbReference type="PROSITE" id="PS00911">
    <property type="entry name" value="DHODEHASE_1"/>
    <property type="match status" value="1"/>
</dbReference>
<dbReference type="PROSITE" id="PS00912">
    <property type="entry name" value="DHODEHASE_2"/>
    <property type="match status" value="1"/>
</dbReference>
<proteinExistence type="inferred from homology"/>
<sequence length="364" mass="38378">MLWPALRSVLFQLDPERVHHLAHWALHRVPPALARARRPAPVPALAVRCMGLDFDGPMGLAAGFDKGDVALPGLFGLGFSHVEIGTITPRPQPGNDRPRLFRLPEHRALLNRMGFNNEGMEACARRLAALPAAARLGPVGINVGKNKATPNEDAASDYLACIERLHPYADYLVVNISSPNTPGLRQLQEREALDRLLRACVRHLAERAPGKPLLVKLAPDLSPEALDEAVDVAIAAGAAGIVATNTTLSRAGVERHPRAAEAGGLSGAPLERLATEVVRRCYARAAGRVPIVGVGGVMDAEGAYAKIRAGATLVQAYTGLIYGGPGFVGRVNAGLARLLERDGFSTLSDAVGADHRQGGGKAAG</sequence>